<name>CHAC2_CHICK</name>
<evidence type="ECO:0000250" key="1">
    <source>
        <dbReference type="UniProtKB" id="O75223"/>
    </source>
</evidence>
<evidence type="ECO:0000250" key="2">
    <source>
        <dbReference type="UniProtKB" id="Q8WUX2"/>
    </source>
</evidence>
<evidence type="ECO:0000250" key="3">
    <source>
        <dbReference type="UniProtKB" id="Q9BUX1"/>
    </source>
</evidence>
<evidence type="ECO:0000305" key="4"/>
<comment type="function">
    <text evidence="2">Catalyzes the cleavage of glutathione into 5-oxo-L-proline and a Cys-Gly dipeptide. Acts specifically on glutathione, but not on other gamma-glutamyl peptides.</text>
</comment>
<comment type="catalytic activity">
    <reaction evidence="2">
        <text>glutathione = L-cysteinylglycine + 5-oxo-L-proline</text>
        <dbReference type="Rhea" id="RHEA:47724"/>
        <dbReference type="ChEBI" id="CHEBI:57925"/>
        <dbReference type="ChEBI" id="CHEBI:58402"/>
        <dbReference type="ChEBI" id="CHEBI:61694"/>
        <dbReference type="EC" id="4.3.2.7"/>
    </reaction>
</comment>
<comment type="subunit">
    <text evidence="2">Monomer.</text>
</comment>
<comment type="subcellular location">
    <subcellularLocation>
        <location evidence="2">Cytoplasm</location>
        <location evidence="2">Cytosol</location>
    </subcellularLocation>
</comment>
<comment type="similarity">
    <text evidence="4">Belongs to the gamma-glutamylcyclotransferase family. ChaC subfamily.</text>
</comment>
<accession>Q5ZI66</accession>
<gene>
    <name evidence="2" type="primary">chac2</name>
    <name type="ORF">RCJMB04_29n19</name>
</gene>
<sequence>MWVFGYGSLIWKVDFPYQEKMVGRIRGYSRRFWQGSTDHRGVPGKPGRVVTLVEDPEGCVWGVAYRLPAGQECEVKAYLDFREKGGYRTTTVVFYPKDSSIKPFDVLLYIGTRDNPNYLGPAPLQEIAEQIIDAVGPSGRNTEYLFELANSMRNLVPEDVDEHLFSLEETSKGTPGKRTKPKLPLE</sequence>
<keyword id="KW-0963">Cytoplasm</keyword>
<keyword id="KW-0456">Lyase</keyword>
<keyword id="KW-1185">Reference proteome</keyword>
<protein>
    <recommendedName>
        <fullName evidence="2">Putative glutathione-specific gamma-glutamylcyclotransferase 2</fullName>
        <shortName evidence="2">Gamma-GCG 2</shortName>
        <ecNumber evidence="2">4.3.2.7</ecNumber>
    </recommendedName>
    <alternativeName>
        <fullName evidence="3">Cation transport regulator-like protein 2</fullName>
    </alternativeName>
</protein>
<organism>
    <name type="scientific">Gallus gallus</name>
    <name type="common">Chicken</name>
    <dbReference type="NCBI Taxonomy" id="9031"/>
    <lineage>
        <taxon>Eukaryota</taxon>
        <taxon>Metazoa</taxon>
        <taxon>Chordata</taxon>
        <taxon>Craniata</taxon>
        <taxon>Vertebrata</taxon>
        <taxon>Euteleostomi</taxon>
        <taxon>Archelosauria</taxon>
        <taxon>Archosauria</taxon>
        <taxon>Dinosauria</taxon>
        <taxon>Saurischia</taxon>
        <taxon>Theropoda</taxon>
        <taxon>Coelurosauria</taxon>
        <taxon>Aves</taxon>
        <taxon>Neognathae</taxon>
        <taxon>Galloanserae</taxon>
        <taxon>Galliformes</taxon>
        <taxon>Phasianidae</taxon>
        <taxon>Phasianinae</taxon>
        <taxon>Gallus</taxon>
    </lineage>
</organism>
<dbReference type="EC" id="4.3.2.7" evidence="2"/>
<dbReference type="EMBL" id="AJ720918">
    <property type="protein sequence ID" value="CAG32577.1"/>
    <property type="molecule type" value="mRNA"/>
</dbReference>
<dbReference type="SMR" id="Q5ZI66"/>
<dbReference type="FunCoup" id="Q5ZI66">
    <property type="interactions" value="1443"/>
</dbReference>
<dbReference type="STRING" id="9031.ENSGALP00000013307"/>
<dbReference type="PaxDb" id="9031-ENSGALP00000013307"/>
<dbReference type="VEuPathDB" id="HostDB:geneid_421221"/>
<dbReference type="eggNOG" id="KOG3182">
    <property type="taxonomic scope" value="Eukaryota"/>
</dbReference>
<dbReference type="HOGENOM" id="CLU_070703_2_2_1"/>
<dbReference type="InParanoid" id="Q5ZI66"/>
<dbReference type="PhylomeDB" id="Q5ZI66"/>
<dbReference type="Proteomes" id="UP000000539">
    <property type="component" value="Unassembled WGS sequence"/>
</dbReference>
<dbReference type="GO" id="GO:0005737">
    <property type="term" value="C:cytoplasm"/>
    <property type="evidence" value="ECO:0000318"/>
    <property type="project" value="GO_Central"/>
</dbReference>
<dbReference type="GO" id="GO:0005829">
    <property type="term" value="C:cytosol"/>
    <property type="evidence" value="ECO:0007669"/>
    <property type="project" value="UniProtKB-SubCell"/>
</dbReference>
<dbReference type="GO" id="GO:0061928">
    <property type="term" value="F:glutathione specific gamma-glutamylcyclotransferase activity"/>
    <property type="evidence" value="ECO:0000318"/>
    <property type="project" value="GO_Central"/>
</dbReference>
<dbReference type="GO" id="GO:0006751">
    <property type="term" value="P:glutathione catabolic process"/>
    <property type="evidence" value="ECO:0000318"/>
    <property type="project" value="GO_Central"/>
</dbReference>
<dbReference type="CDD" id="cd06661">
    <property type="entry name" value="GGCT_like"/>
    <property type="match status" value="1"/>
</dbReference>
<dbReference type="FunFam" id="3.10.490.10:FF:000003">
    <property type="entry name" value="Gamma-glutamylcyclotransferase"/>
    <property type="match status" value="1"/>
</dbReference>
<dbReference type="Gene3D" id="3.10.490.10">
    <property type="entry name" value="Gamma-glutamyl cyclotransferase-like"/>
    <property type="match status" value="1"/>
</dbReference>
<dbReference type="InterPro" id="IPR006840">
    <property type="entry name" value="ChaC"/>
</dbReference>
<dbReference type="InterPro" id="IPR013024">
    <property type="entry name" value="GGCT-like"/>
</dbReference>
<dbReference type="InterPro" id="IPR036568">
    <property type="entry name" value="GGCT-like_sf"/>
</dbReference>
<dbReference type="PANTHER" id="PTHR12192">
    <property type="entry name" value="CATION TRANSPORT PROTEIN CHAC-RELATED"/>
    <property type="match status" value="1"/>
</dbReference>
<dbReference type="PANTHER" id="PTHR12192:SF2">
    <property type="entry name" value="GLUTATHIONE-SPECIFIC GAMMA-GLUTAMYLCYCLOTRANSFERASE 2"/>
    <property type="match status" value="1"/>
</dbReference>
<dbReference type="Pfam" id="PF04752">
    <property type="entry name" value="ChaC"/>
    <property type="match status" value="1"/>
</dbReference>
<dbReference type="SUPFAM" id="SSF110857">
    <property type="entry name" value="Gamma-glutamyl cyclotransferase-like"/>
    <property type="match status" value="1"/>
</dbReference>
<feature type="chain" id="PRO_0000314915" description="Putative glutathione-specific gamma-glutamylcyclotransferase 2">
    <location>
        <begin position="1"/>
        <end position="186"/>
    </location>
</feature>
<feature type="active site" description="Proton acceptor" evidence="1">
    <location>
        <position position="83"/>
    </location>
</feature>
<feature type="binding site" evidence="1">
    <location>
        <begin position="3"/>
        <end position="8"/>
    </location>
    <ligand>
        <name>substrate</name>
    </ligand>
</feature>
<proteinExistence type="evidence at transcript level"/>
<reference key="1">
    <citation type="journal article" date="2005" name="Genome Biol.">
        <title>Full-length cDNAs from chicken bursal lymphocytes to facilitate gene function analysis.</title>
        <authorList>
            <person name="Caldwell R.B."/>
            <person name="Kierzek A.M."/>
            <person name="Arakawa H."/>
            <person name="Bezzubov Y."/>
            <person name="Zaim J."/>
            <person name="Fiedler P."/>
            <person name="Kutter S."/>
            <person name="Blagodatski A."/>
            <person name="Kostovska D."/>
            <person name="Koter M."/>
            <person name="Plachy J."/>
            <person name="Carninci P."/>
            <person name="Hayashizaki Y."/>
            <person name="Buerstedde J.-M."/>
        </authorList>
    </citation>
    <scope>NUCLEOTIDE SEQUENCE [LARGE SCALE MRNA]</scope>
    <source>
        <strain>CB</strain>
        <tissue>Bursa of Fabricius</tissue>
    </source>
</reference>